<accession>B4EBT3</accession>
<proteinExistence type="inferred from homology"/>
<keyword id="KW-0963">Cytoplasm</keyword>
<keyword id="KW-0413">Isomerase</keyword>
<keyword id="KW-0627">Porphyrin biosynthesis</keyword>
<keyword id="KW-0663">Pyridoxal phosphate</keyword>
<reference key="1">
    <citation type="journal article" date="2009" name="J. Bacteriol.">
        <title>The genome of Burkholderia cenocepacia J2315, an epidemic pathogen of cystic fibrosis patients.</title>
        <authorList>
            <person name="Holden M.T."/>
            <person name="Seth-Smith H.M."/>
            <person name="Crossman L.C."/>
            <person name="Sebaihia M."/>
            <person name="Bentley S.D."/>
            <person name="Cerdeno-Tarraga A.M."/>
            <person name="Thomson N.R."/>
            <person name="Bason N."/>
            <person name="Quail M.A."/>
            <person name="Sharp S."/>
            <person name="Cherevach I."/>
            <person name="Churcher C."/>
            <person name="Goodhead I."/>
            <person name="Hauser H."/>
            <person name="Holroyd N."/>
            <person name="Mungall K."/>
            <person name="Scott P."/>
            <person name="Walker D."/>
            <person name="White B."/>
            <person name="Rose H."/>
            <person name="Iversen P."/>
            <person name="Mil-Homens D."/>
            <person name="Rocha E.P."/>
            <person name="Fialho A.M."/>
            <person name="Baldwin A."/>
            <person name="Dowson C."/>
            <person name="Barrell B.G."/>
            <person name="Govan J.R."/>
            <person name="Vandamme P."/>
            <person name="Hart C.A."/>
            <person name="Mahenthiralingam E."/>
            <person name="Parkhill J."/>
        </authorList>
    </citation>
    <scope>NUCLEOTIDE SEQUENCE [LARGE SCALE GENOMIC DNA]</scope>
    <source>
        <strain>ATCC BAA-245 / DSM 16553 / LMG 16656 / NCTC 13227 / J2315 / CF5610</strain>
    </source>
</reference>
<name>GSA_BURCJ</name>
<evidence type="ECO:0000255" key="1">
    <source>
        <dbReference type="HAMAP-Rule" id="MF_00375"/>
    </source>
</evidence>
<sequence>MSNNQILFERAQKTIPGGVNSPVRAFRSVGGTPRFVARAQGPYFWDADGKQYIDYIGSWGPMIVGHVHPEVLSAVQNVLADGFSFGAPTEAEIEIAEEICKLVPSIEQVRMVSSGTEATMSALRLARGFTGRSRIVKFEGCYHGHADSLLVKAGSGLLTFGNPTSAGVPADIAKHTTVLEYNNVAALEEAFGAFGDEIAAVIVEPVAGNMNLVRGTPEFLNALRALCTKHGAVLIFDEVMCGFRVALGGAQAYYGIAADLTCLGKVIGGGMPAAAFGGRRDIMAHLAPLGGVYQAGTLSGNPIAVAAGLKTLQLIQAPGFYDALTAQTKRLTDGLAAEARAAGVPFAADSIGAMFGLYFAERVPTSFAEVTKSDIARFNRFFHLMLDEGVYFAPSAYEAGFVSSTHDDAVIDATLAAARRAFAALAA</sequence>
<gene>
    <name evidence="1" type="primary">hemL</name>
    <name type="ordered locus">BceJ2315_29950</name>
    <name type="ORF">BCAL3049</name>
</gene>
<protein>
    <recommendedName>
        <fullName evidence="1">Glutamate-1-semialdehyde 2,1-aminomutase</fullName>
        <shortName evidence="1">GSA</shortName>
        <ecNumber evidence="1">5.4.3.8</ecNumber>
    </recommendedName>
    <alternativeName>
        <fullName evidence="1">Glutamate-1-semialdehyde aminotransferase</fullName>
        <shortName evidence="1">GSA-AT</shortName>
    </alternativeName>
</protein>
<feature type="chain" id="PRO_1000121860" description="Glutamate-1-semialdehyde 2,1-aminomutase">
    <location>
        <begin position="1"/>
        <end position="427"/>
    </location>
</feature>
<feature type="modified residue" description="N6-(pyridoxal phosphate)lysine" evidence="1">
    <location>
        <position position="265"/>
    </location>
</feature>
<comment type="catalytic activity">
    <reaction evidence="1">
        <text>(S)-4-amino-5-oxopentanoate = 5-aminolevulinate</text>
        <dbReference type="Rhea" id="RHEA:14265"/>
        <dbReference type="ChEBI" id="CHEBI:57501"/>
        <dbReference type="ChEBI" id="CHEBI:356416"/>
        <dbReference type="EC" id="5.4.3.8"/>
    </reaction>
</comment>
<comment type="cofactor">
    <cofactor evidence="1">
        <name>pyridoxal 5'-phosphate</name>
        <dbReference type="ChEBI" id="CHEBI:597326"/>
    </cofactor>
</comment>
<comment type="pathway">
    <text evidence="1">Porphyrin-containing compound metabolism; protoporphyrin-IX biosynthesis; 5-aminolevulinate from L-glutamyl-tRNA(Glu): step 2/2.</text>
</comment>
<comment type="subunit">
    <text evidence="1">Homodimer.</text>
</comment>
<comment type="subcellular location">
    <subcellularLocation>
        <location evidence="1">Cytoplasm</location>
    </subcellularLocation>
</comment>
<comment type="similarity">
    <text evidence="1">Belongs to the class-III pyridoxal-phosphate-dependent aminotransferase family. HemL subfamily.</text>
</comment>
<dbReference type="EC" id="5.4.3.8" evidence="1"/>
<dbReference type="EMBL" id="AM747720">
    <property type="protein sequence ID" value="CAR53371.1"/>
    <property type="molecule type" value="Genomic_DNA"/>
</dbReference>
<dbReference type="RefSeq" id="WP_006484243.1">
    <property type="nucleotide sequence ID" value="NC_011000.1"/>
</dbReference>
<dbReference type="SMR" id="B4EBT3"/>
<dbReference type="KEGG" id="bcj:BCAL3049"/>
<dbReference type="eggNOG" id="COG0001">
    <property type="taxonomic scope" value="Bacteria"/>
</dbReference>
<dbReference type="HOGENOM" id="CLU_016922_1_5_4"/>
<dbReference type="BioCyc" id="BCEN216591:G1G1V-3381-MONOMER"/>
<dbReference type="UniPathway" id="UPA00251">
    <property type="reaction ID" value="UER00317"/>
</dbReference>
<dbReference type="Proteomes" id="UP000001035">
    <property type="component" value="Chromosome 1"/>
</dbReference>
<dbReference type="GO" id="GO:0005737">
    <property type="term" value="C:cytoplasm"/>
    <property type="evidence" value="ECO:0007669"/>
    <property type="project" value="UniProtKB-SubCell"/>
</dbReference>
<dbReference type="GO" id="GO:0042286">
    <property type="term" value="F:glutamate-1-semialdehyde 2,1-aminomutase activity"/>
    <property type="evidence" value="ECO:0007669"/>
    <property type="project" value="UniProtKB-UniRule"/>
</dbReference>
<dbReference type="GO" id="GO:0030170">
    <property type="term" value="F:pyridoxal phosphate binding"/>
    <property type="evidence" value="ECO:0007669"/>
    <property type="project" value="InterPro"/>
</dbReference>
<dbReference type="GO" id="GO:0008483">
    <property type="term" value="F:transaminase activity"/>
    <property type="evidence" value="ECO:0007669"/>
    <property type="project" value="InterPro"/>
</dbReference>
<dbReference type="GO" id="GO:0006782">
    <property type="term" value="P:protoporphyrinogen IX biosynthetic process"/>
    <property type="evidence" value="ECO:0007669"/>
    <property type="project" value="UniProtKB-UniRule"/>
</dbReference>
<dbReference type="CDD" id="cd00610">
    <property type="entry name" value="OAT_like"/>
    <property type="match status" value="1"/>
</dbReference>
<dbReference type="FunFam" id="3.40.640.10:FF:000021">
    <property type="entry name" value="Glutamate-1-semialdehyde 2,1-aminomutase"/>
    <property type="match status" value="1"/>
</dbReference>
<dbReference type="Gene3D" id="3.90.1150.10">
    <property type="entry name" value="Aspartate Aminotransferase, domain 1"/>
    <property type="match status" value="1"/>
</dbReference>
<dbReference type="Gene3D" id="3.40.640.10">
    <property type="entry name" value="Type I PLP-dependent aspartate aminotransferase-like (Major domain)"/>
    <property type="match status" value="1"/>
</dbReference>
<dbReference type="HAMAP" id="MF_00375">
    <property type="entry name" value="HemL_aminotrans_3"/>
    <property type="match status" value="1"/>
</dbReference>
<dbReference type="InterPro" id="IPR004639">
    <property type="entry name" value="4pyrrol_synth_GluAld_NH2Trfase"/>
</dbReference>
<dbReference type="InterPro" id="IPR005814">
    <property type="entry name" value="Aminotrans_3"/>
</dbReference>
<dbReference type="InterPro" id="IPR049704">
    <property type="entry name" value="Aminotrans_3_PPA_site"/>
</dbReference>
<dbReference type="InterPro" id="IPR015424">
    <property type="entry name" value="PyrdxlP-dep_Trfase"/>
</dbReference>
<dbReference type="InterPro" id="IPR015421">
    <property type="entry name" value="PyrdxlP-dep_Trfase_major"/>
</dbReference>
<dbReference type="InterPro" id="IPR015422">
    <property type="entry name" value="PyrdxlP-dep_Trfase_small"/>
</dbReference>
<dbReference type="NCBIfam" id="TIGR00713">
    <property type="entry name" value="hemL"/>
    <property type="match status" value="1"/>
</dbReference>
<dbReference type="NCBIfam" id="NF000818">
    <property type="entry name" value="PRK00062.1"/>
    <property type="match status" value="1"/>
</dbReference>
<dbReference type="PANTHER" id="PTHR43713">
    <property type="entry name" value="GLUTAMATE-1-SEMIALDEHYDE 2,1-AMINOMUTASE"/>
    <property type="match status" value="1"/>
</dbReference>
<dbReference type="PANTHER" id="PTHR43713:SF3">
    <property type="entry name" value="GLUTAMATE-1-SEMIALDEHYDE 2,1-AMINOMUTASE 1, CHLOROPLASTIC-RELATED"/>
    <property type="match status" value="1"/>
</dbReference>
<dbReference type="Pfam" id="PF00202">
    <property type="entry name" value="Aminotran_3"/>
    <property type="match status" value="1"/>
</dbReference>
<dbReference type="SUPFAM" id="SSF53383">
    <property type="entry name" value="PLP-dependent transferases"/>
    <property type="match status" value="1"/>
</dbReference>
<dbReference type="PROSITE" id="PS00600">
    <property type="entry name" value="AA_TRANSFER_CLASS_3"/>
    <property type="match status" value="1"/>
</dbReference>
<organism>
    <name type="scientific">Burkholderia cenocepacia (strain ATCC BAA-245 / DSM 16553 / LMG 16656 / NCTC 13227 / J2315 / CF5610)</name>
    <name type="common">Burkholderia cepacia (strain J2315)</name>
    <dbReference type="NCBI Taxonomy" id="216591"/>
    <lineage>
        <taxon>Bacteria</taxon>
        <taxon>Pseudomonadati</taxon>
        <taxon>Pseudomonadota</taxon>
        <taxon>Betaproteobacteria</taxon>
        <taxon>Burkholderiales</taxon>
        <taxon>Burkholderiaceae</taxon>
        <taxon>Burkholderia</taxon>
        <taxon>Burkholderia cepacia complex</taxon>
    </lineage>
</organism>